<name>HMA2_ARATH</name>
<feature type="chain" id="PRO_0000046400" description="Cadmium/zinc-transporting ATPase HMA2">
    <location>
        <begin position="1"/>
        <end position="951"/>
    </location>
</feature>
<feature type="topological domain" description="Cytoplasmic" evidence="2">
    <location>
        <begin position="1"/>
        <end position="83"/>
    </location>
</feature>
<feature type="transmembrane region" description="Helical" evidence="2">
    <location>
        <begin position="84"/>
        <end position="105"/>
    </location>
</feature>
<feature type="topological domain" description="Extracellular" evidence="2">
    <location>
        <begin position="106"/>
        <end position="108"/>
    </location>
</feature>
<feature type="transmembrane region" description="Helical" evidence="2">
    <location>
        <begin position="109"/>
        <end position="128"/>
    </location>
</feature>
<feature type="topological domain" description="Cytoplasmic" evidence="2">
    <location>
        <begin position="129"/>
        <end position="135"/>
    </location>
</feature>
<feature type="transmembrane region" description="Helical" evidence="2">
    <location>
        <begin position="136"/>
        <end position="156"/>
    </location>
</feature>
<feature type="topological domain" description="Extracellular" evidence="2">
    <location>
        <position position="157"/>
    </location>
</feature>
<feature type="transmembrane region" description="Helical" evidence="2">
    <location>
        <begin position="158"/>
        <end position="178"/>
    </location>
</feature>
<feature type="topological domain" description="Cytoplasmic" evidence="2">
    <location>
        <begin position="179"/>
        <end position="304"/>
    </location>
</feature>
<feature type="transmembrane region" description="Helical" evidence="2">
    <location>
        <begin position="305"/>
        <end position="327"/>
    </location>
</feature>
<feature type="topological domain" description="Extracellular" evidence="2">
    <location>
        <begin position="328"/>
        <end position="335"/>
    </location>
</feature>
<feature type="transmembrane region" description="Helical" evidence="2">
    <location>
        <begin position="336"/>
        <end position="353"/>
    </location>
</feature>
<feature type="topological domain" description="Cytoplasmic" evidence="2">
    <location>
        <begin position="354"/>
        <end position="647"/>
    </location>
</feature>
<feature type="transmembrane region" description="Helical" evidence="2">
    <location>
        <begin position="648"/>
        <end position="667"/>
    </location>
</feature>
<feature type="topological domain" description="Extracellular" evidence="2">
    <location>
        <begin position="668"/>
        <end position="671"/>
    </location>
</feature>
<feature type="transmembrane region" description="Helical" evidence="2">
    <location>
        <begin position="672"/>
        <end position="691"/>
    </location>
</feature>
<feature type="topological domain" description="Cytoplasmic" evidence="2">
    <location>
        <begin position="692"/>
        <end position="951"/>
    </location>
</feature>
<feature type="domain" description="HMA" evidence="3">
    <location>
        <begin position="7"/>
        <end position="73"/>
    </location>
</feature>
<feature type="region of interest" description="Disordered" evidence="4">
    <location>
        <begin position="841"/>
        <end position="866"/>
    </location>
</feature>
<feature type="compositionally biased region" description="Basic and acidic residues" evidence="4">
    <location>
        <begin position="841"/>
        <end position="851"/>
    </location>
</feature>
<feature type="active site" description="4-aspartylphosphate intermediate" evidence="1">
    <location>
        <position position="391"/>
    </location>
</feature>
<feature type="binding site">
    <location>
        <position position="592"/>
    </location>
    <ligand>
        <name>Mg(2+)</name>
        <dbReference type="ChEBI" id="CHEBI:18420"/>
    </ligand>
</feature>
<feature type="binding site">
    <location>
        <position position="596"/>
    </location>
    <ligand>
        <name>Mg(2+)</name>
        <dbReference type="ChEBI" id="CHEBI:18420"/>
    </ligand>
</feature>
<feature type="sequence conflict" description="In Ref. 1; AAR10767 and 2; AAL14248." evidence="6" ref="1 2">
    <original>F</original>
    <variation>L</variation>
    <location>
        <position position="459"/>
    </location>
</feature>
<feature type="sequence conflict" description="In Ref. 1; AAR10767 and 2; AAL14248." evidence="6" ref="1 2">
    <original>A</original>
    <variation>T</variation>
    <location>
        <position position="759"/>
    </location>
</feature>
<feature type="sequence conflict" description="In Ref. 1; AAR10767 and 2; AAL14248." evidence="6" ref="1 2">
    <original>N</original>
    <variation>K</variation>
    <location>
        <position position="776"/>
    </location>
</feature>
<feature type="sequence conflict" description="In Ref. 1; AAR10767 and 2; AAL14248." evidence="6" ref="1 2">
    <original>S</original>
    <variation>N</variation>
    <location>
        <position position="783"/>
    </location>
</feature>
<feature type="sequence conflict" description="In Ref. 1; AAR10767 and 2; AAL14248." evidence="6" ref="1 2">
    <original>F</original>
    <variation>C</variation>
    <location>
        <position position="885"/>
    </location>
</feature>
<proteinExistence type="evidence at transcript level"/>
<organism>
    <name type="scientific">Arabidopsis thaliana</name>
    <name type="common">Mouse-ear cress</name>
    <dbReference type="NCBI Taxonomy" id="3702"/>
    <lineage>
        <taxon>Eukaryota</taxon>
        <taxon>Viridiplantae</taxon>
        <taxon>Streptophyta</taxon>
        <taxon>Embryophyta</taxon>
        <taxon>Tracheophyta</taxon>
        <taxon>Spermatophyta</taxon>
        <taxon>Magnoliopsida</taxon>
        <taxon>eudicotyledons</taxon>
        <taxon>Gunneridae</taxon>
        <taxon>Pentapetalae</taxon>
        <taxon>rosids</taxon>
        <taxon>malvids</taxon>
        <taxon>Brassicales</taxon>
        <taxon>Brassicaceae</taxon>
        <taxon>Camelineae</taxon>
        <taxon>Arabidopsis</taxon>
    </lineage>
</organism>
<accession>Q9SZW4</accession>
<accession>Q8LPW1</accession>
<protein>
    <recommendedName>
        <fullName>Cadmium/zinc-transporting ATPase HMA2</fullName>
        <ecNumber>7.2.2.12</ecNumber>
        <ecNumber>7.2.2.21</ecNumber>
    </recommendedName>
    <alternativeName>
        <fullName>Cadmium/zinc-transporting ATPase 3</fullName>
    </alternativeName>
    <alternativeName>
        <fullName>Protein HEAVY METAL ATPASE 2</fullName>
    </alternativeName>
</protein>
<keyword id="KW-0067">ATP-binding</keyword>
<keyword id="KW-0104">Cadmium</keyword>
<keyword id="KW-1003">Cell membrane</keyword>
<keyword id="KW-0460">Magnesium</keyword>
<keyword id="KW-0472">Membrane</keyword>
<keyword id="KW-0479">Metal-binding</keyword>
<keyword id="KW-0547">Nucleotide-binding</keyword>
<keyword id="KW-1185">Reference proteome</keyword>
<keyword id="KW-1278">Translocase</keyword>
<keyword id="KW-0812">Transmembrane</keyword>
<keyword id="KW-1133">Transmembrane helix</keyword>
<keyword id="KW-0862">Zinc</keyword>
<gene>
    <name type="primary">HMA2</name>
    <name type="ordered locus">At4g30110</name>
    <name type="ORF">F6G3.140</name>
</gene>
<comment type="function">
    <text evidence="5">Plays an important role in zinc transport and homeostasis. Could also be involved in cadmium detoxification.</text>
</comment>
<comment type="catalytic activity">
    <reaction>
        <text>Zn(2+)(in) + ATP + H2O = Zn(2+)(out) + ADP + phosphate + H(+)</text>
        <dbReference type="Rhea" id="RHEA:20621"/>
        <dbReference type="ChEBI" id="CHEBI:15377"/>
        <dbReference type="ChEBI" id="CHEBI:15378"/>
        <dbReference type="ChEBI" id="CHEBI:29105"/>
        <dbReference type="ChEBI" id="CHEBI:30616"/>
        <dbReference type="ChEBI" id="CHEBI:43474"/>
        <dbReference type="ChEBI" id="CHEBI:456216"/>
        <dbReference type="EC" id="7.2.2.12"/>
    </reaction>
</comment>
<comment type="catalytic activity">
    <reaction>
        <text>Cd(2+)(in) + ATP + H2O = Cd(2+)(out) + ADP + phosphate + H(+)</text>
        <dbReference type="Rhea" id="RHEA:12132"/>
        <dbReference type="ChEBI" id="CHEBI:15377"/>
        <dbReference type="ChEBI" id="CHEBI:15378"/>
        <dbReference type="ChEBI" id="CHEBI:30616"/>
        <dbReference type="ChEBI" id="CHEBI:43474"/>
        <dbReference type="ChEBI" id="CHEBI:48775"/>
        <dbReference type="ChEBI" id="CHEBI:456216"/>
        <dbReference type="EC" id="7.2.2.21"/>
    </reaction>
</comment>
<comment type="subcellular location">
    <subcellularLocation>
        <location evidence="5">Cell membrane</location>
        <topology evidence="5">Multi-pass membrane protein</topology>
    </subcellularLocation>
</comment>
<comment type="tissue specificity">
    <text evidence="5">Predominantly expressed in the vascular tissues of roots, stems, and leaves. Also detected in developing anthers.</text>
</comment>
<comment type="similarity">
    <text evidence="6">Belongs to the cation transport ATPase (P-type) (TC 3.A.3) family. Type IB subfamily.</text>
</comment>
<evidence type="ECO:0000250" key="1"/>
<evidence type="ECO:0000255" key="2"/>
<evidence type="ECO:0000255" key="3">
    <source>
        <dbReference type="PROSITE-ProRule" id="PRU00280"/>
    </source>
</evidence>
<evidence type="ECO:0000256" key="4">
    <source>
        <dbReference type="SAM" id="MobiDB-lite"/>
    </source>
</evidence>
<evidence type="ECO:0000269" key="5">
    <source>
    </source>
</evidence>
<evidence type="ECO:0000305" key="6"/>
<dbReference type="EC" id="7.2.2.12"/>
<dbReference type="EC" id="7.2.2.21"/>
<dbReference type="EMBL" id="AY054390">
    <property type="protein sequence ID" value="AAL14248.1"/>
    <property type="molecule type" value="mRNA"/>
</dbReference>
<dbReference type="EMBL" id="AY434728">
    <property type="protein sequence ID" value="AAR10767.1"/>
    <property type="molecule type" value="mRNA"/>
</dbReference>
<dbReference type="EMBL" id="AL078464">
    <property type="protein sequence ID" value="CAB43846.1"/>
    <property type="molecule type" value="Genomic_DNA"/>
</dbReference>
<dbReference type="EMBL" id="AL161576">
    <property type="protein sequence ID" value="CAB81004.1"/>
    <property type="molecule type" value="Genomic_DNA"/>
</dbReference>
<dbReference type="EMBL" id="CP002687">
    <property type="protein sequence ID" value="AEE85722.1"/>
    <property type="molecule type" value="Genomic_DNA"/>
</dbReference>
<dbReference type="EMBL" id="CP002687">
    <property type="protein sequence ID" value="ANM67783.1"/>
    <property type="molecule type" value="Genomic_DNA"/>
</dbReference>
<dbReference type="PIR" id="T08987">
    <property type="entry name" value="T08987"/>
</dbReference>
<dbReference type="RefSeq" id="NP_001320088.1">
    <property type="nucleotide sequence ID" value="NM_001341993.1"/>
</dbReference>
<dbReference type="RefSeq" id="NP_194740.1">
    <property type="nucleotide sequence ID" value="NM_119157.4"/>
</dbReference>
<dbReference type="SMR" id="Q9SZW4"/>
<dbReference type="BioGRID" id="14421">
    <property type="interactions" value="1"/>
</dbReference>
<dbReference type="FunCoup" id="Q9SZW4">
    <property type="interactions" value="6"/>
</dbReference>
<dbReference type="STRING" id="3702.Q9SZW4"/>
<dbReference type="TCDB" id="3.A.3.6.7">
    <property type="family name" value="the p-type atpase (p-atpase) superfamily"/>
</dbReference>
<dbReference type="GlyGen" id="Q9SZW4">
    <property type="glycosylation" value="1 site"/>
</dbReference>
<dbReference type="iPTMnet" id="Q9SZW4"/>
<dbReference type="PaxDb" id="3702-AT4G30110.1"/>
<dbReference type="ProteomicsDB" id="230368"/>
<dbReference type="EnsemblPlants" id="AT4G30110.1">
    <property type="protein sequence ID" value="AT4G30110.1"/>
    <property type="gene ID" value="AT4G30110"/>
</dbReference>
<dbReference type="EnsemblPlants" id="AT4G30110.2">
    <property type="protein sequence ID" value="AT4G30110.2"/>
    <property type="gene ID" value="AT4G30110"/>
</dbReference>
<dbReference type="GeneID" id="829134"/>
<dbReference type="Gramene" id="AT4G30110.1">
    <property type="protein sequence ID" value="AT4G30110.1"/>
    <property type="gene ID" value="AT4G30110"/>
</dbReference>
<dbReference type="Gramene" id="AT4G30110.2">
    <property type="protein sequence ID" value="AT4G30110.2"/>
    <property type="gene ID" value="AT4G30110"/>
</dbReference>
<dbReference type="KEGG" id="ath:AT4G30110"/>
<dbReference type="Araport" id="AT4G30110"/>
<dbReference type="TAIR" id="AT4G30110">
    <property type="gene designation" value="HMA2"/>
</dbReference>
<dbReference type="eggNOG" id="KOG0207">
    <property type="taxonomic scope" value="Eukaryota"/>
</dbReference>
<dbReference type="HOGENOM" id="CLU_001771_3_1_1"/>
<dbReference type="InParanoid" id="Q9SZW4"/>
<dbReference type="OMA" id="GHEHSHC"/>
<dbReference type="PhylomeDB" id="Q9SZW4"/>
<dbReference type="BioCyc" id="ARA:AT4G30110-MONOMER"/>
<dbReference type="BRENDA" id="7.2.2.12">
    <property type="organism ID" value="399"/>
</dbReference>
<dbReference type="PRO" id="PR:Q9SZW4"/>
<dbReference type="Proteomes" id="UP000006548">
    <property type="component" value="Chromosome 4"/>
</dbReference>
<dbReference type="ExpressionAtlas" id="Q9SZW4">
    <property type="expression patterns" value="baseline and differential"/>
</dbReference>
<dbReference type="GO" id="GO:0005886">
    <property type="term" value="C:plasma membrane"/>
    <property type="evidence" value="ECO:0000314"/>
    <property type="project" value="TAIR"/>
</dbReference>
<dbReference type="GO" id="GO:0005524">
    <property type="term" value="F:ATP binding"/>
    <property type="evidence" value="ECO:0007669"/>
    <property type="project" value="UniProtKB-KW"/>
</dbReference>
<dbReference type="GO" id="GO:0016887">
    <property type="term" value="F:ATP hydrolysis activity"/>
    <property type="evidence" value="ECO:0007669"/>
    <property type="project" value="InterPro"/>
</dbReference>
<dbReference type="GO" id="GO:0046872">
    <property type="term" value="F:metal ion binding"/>
    <property type="evidence" value="ECO:0007669"/>
    <property type="project" value="UniProtKB-KW"/>
</dbReference>
<dbReference type="GO" id="GO:0008551">
    <property type="term" value="F:P-type cadmium transporter activity"/>
    <property type="evidence" value="ECO:0007669"/>
    <property type="project" value="UniProtKB-EC"/>
</dbReference>
<dbReference type="GO" id="GO:0016463">
    <property type="term" value="F:P-type zinc transporter activity"/>
    <property type="evidence" value="ECO:0007669"/>
    <property type="project" value="UniProtKB-EC"/>
</dbReference>
<dbReference type="CDD" id="cd02079">
    <property type="entry name" value="P-type_ATPase_HM"/>
    <property type="match status" value="1"/>
</dbReference>
<dbReference type="FunFam" id="2.70.150.10:FF:000002">
    <property type="entry name" value="Copper-transporting ATPase 1, putative"/>
    <property type="match status" value="1"/>
</dbReference>
<dbReference type="FunFam" id="3.30.70.100:FF:000022">
    <property type="entry name" value="Putative cadmium/zinc-transporting ATPase 3"/>
    <property type="match status" value="1"/>
</dbReference>
<dbReference type="FunFam" id="3.40.1110.10:FF:000043">
    <property type="entry name" value="Putative cadmium/zinc-transporting ATPase 3"/>
    <property type="match status" value="1"/>
</dbReference>
<dbReference type="Gene3D" id="3.30.70.100">
    <property type="match status" value="1"/>
</dbReference>
<dbReference type="Gene3D" id="3.40.1110.10">
    <property type="entry name" value="Calcium-transporting ATPase, cytoplasmic domain N"/>
    <property type="match status" value="1"/>
</dbReference>
<dbReference type="Gene3D" id="2.70.150.10">
    <property type="entry name" value="Calcium-transporting ATPase, cytoplasmic transduction domain A"/>
    <property type="match status" value="1"/>
</dbReference>
<dbReference type="Gene3D" id="3.40.50.1000">
    <property type="entry name" value="HAD superfamily/HAD-like"/>
    <property type="match status" value="1"/>
</dbReference>
<dbReference type="InterPro" id="IPR023299">
    <property type="entry name" value="ATPase_P-typ_cyto_dom_N"/>
</dbReference>
<dbReference type="InterPro" id="IPR018303">
    <property type="entry name" value="ATPase_P-typ_P_site"/>
</dbReference>
<dbReference type="InterPro" id="IPR023298">
    <property type="entry name" value="ATPase_P-typ_TM_dom_sf"/>
</dbReference>
<dbReference type="InterPro" id="IPR008250">
    <property type="entry name" value="ATPase_P-typ_transduc_dom_A_sf"/>
</dbReference>
<dbReference type="InterPro" id="IPR051014">
    <property type="entry name" value="Cation_Transport_ATPase_IB"/>
</dbReference>
<dbReference type="InterPro" id="IPR036412">
    <property type="entry name" value="HAD-like_sf"/>
</dbReference>
<dbReference type="InterPro" id="IPR023214">
    <property type="entry name" value="HAD_sf"/>
</dbReference>
<dbReference type="InterPro" id="IPR006121">
    <property type="entry name" value="HMA_dom"/>
</dbReference>
<dbReference type="InterPro" id="IPR036163">
    <property type="entry name" value="HMA_dom_sf"/>
</dbReference>
<dbReference type="InterPro" id="IPR027256">
    <property type="entry name" value="P-typ_ATPase_IB"/>
</dbReference>
<dbReference type="InterPro" id="IPR001757">
    <property type="entry name" value="P_typ_ATPase"/>
</dbReference>
<dbReference type="InterPro" id="IPR044492">
    <property type="entry name" value="P_typ_ATPase_HD_dom"/>
</dbReference>
<dbReference type="NCBIfam" id="TIGR01512">
    <property type="entry name" value="ATPase-IB2_Cd"/>
    <property type="match status" value="1"/>
</dbReference>
<dbReference type="NCBIfam" id="TIGR01525">
    <property type="entry name" value="ATPase-IB_hvy"/>
    <property type="match status" value="1"/>
</dbReference>
<dbReference type="NCBIfam" id="TIGR01494">
    <property type="entry name" value="ATPase_P-type"/>
    <property type="match status" value="1"/>
</dbReference>
<dbReference type="PANTHER" id="PTHR48085">
    <property type="entry name" value="CADMIUM/ZINC-TRANSPORTING ATPASE HMA2-RELATED"/>
    <property type="match status" value="1"/>
</dbReference>
<dbReference type="PANTHER" id="PTHR48085:SF14">
    <property type="entry name" value="CADMIUM_ZINC-TRANSPORTING ATPASE HMA2"/>
    <property type="match status" value="1"/>
</dbReference>
<dbReference type="Pfam" id="PF00122">
    <property type="entry name" value="E1-E2_ATPase"/>
    <property type="match status" value="1"/>
</dbReference>
<dbReference type="Pfam" id="PF00702">
    <property type="entry name" value="Hydrolase"/>
    <property type="match status" value="1"/>
</dbReference>
<dbReference type="PRINTS" id="PR00119">
    <property type="entry name" value="CATATPASE"/>
</dbReference>
<dbReference type="PRINTS" id="PR00120">
    <property type="entry name" value="HATPASE"/>
</dbReference>
<dbReference type="SFLD" id="SFLDS00003">
    <property type="entry name" value="Haloacid_Dehalogenase"/>
    <property type="match status" value="1"/>
</dbReference>
<dbReference type="SFLD" id="SFLDF00027">
    <property type="entry name" value="p-type_atpase"/>
    <property type="match status" value="1"/>
</dbReference>
<dbReference type="SUPFAM" id="SSF81653">
    <property type="entry name" value="Calcium ATPase, transduction domain A"/>
    <property type="match status" value="1"/>
</dbReference>
<dbReference type="SUPFAM" id="SSF81665">
    <property type="entry name" value="Calcium ATPase, transmembrane domain M"/>
    <property type="match status" value="1"/>
</dbReference>
<dbReference type="SUPFAM" id="SSF56784">
    <property type="entry name" value="HAD-like"/>
    <property type="match status" value="1"/>
</dbReference>
<dbReference type="SUPFAM" id="SSF55008">
    <property type="entry name" value="HMA, heavy metal-associated domain"/>
    <property type="match status" value="1"/>
</dbReference>
<dbReference type="PROSITE" id="PS00154">
    <property type="entry name" value="ATPASE_E1_E2"/>
    <property type="match status" value="1"/>
</dbReference>
<dbReference type="PROSITE" id="PS50846">
    <property type="entry name" value="HMA_2"/>
    <property type="match status" value="1"/>
</dbReference>
<sequence>MASKKMTKSYFDVLGICCTSEVPLIENILNSMDGVKEFSVIVPSRTVIVVHDTLILSQFQIVKALNQAQLEANVRVTGETNFKNKWPSPFAVVSGILLLLSFFKYLYSPFRWLAVAAVVAGIYPILAKAVASLARFRIDINILVVVTVGATIGMQDYTEAAVVVFLFTIAEWLQSRASYKASAVMQSLMSLAPQKAVIAETGEEVEVDELKTNTVIAVKAGETIPIDGVVVDGNCEVDEKTLTGEAFPVPKLKDSTVWAGTINLNGYITVNTTALAEDCVVAKMAKLVEEAQNSKTETQRFIDKCSKYYTPAIILISICFVAIPFALKVHNLKHWVHLALVVLVSACPCGLILSTPVATFCALTKAATSGLLIKGADYLETLAKIKIVAFDKTGTITRGEFIVMDFQSLSEDISLQSLLYWVSSTESKSSHPMAAAVVDYARSVSVEPKPEAVEDYQNFPGEGIYGKIDGKEVYIGNKRIASRAGCLSVPDIDVDTKGGKTIGYVYVGETLAGVFNLSDACRSGVAQAMKELKSLGIKIAMLTGDNHAAAMHAQEQLGNAMDIVRAELLPEDKSEIIKQLKREEGPTAMVGDGLNDAPALATADIGISMGVSGSALATETGNIILMSNDIRRIPQAIKLAKRAKRKVVENVVISITMKGAILALAFAGHPLIWAAVLADVGTCLLVILNSMLLLSDKHKTGNKCYRESSSSSVLIAEKLEGDAAGDMEAGLLPKISDKHCKPGCCGTKTQEKAMKPAKASSDHSHSGCCETKQKDNVTVVKKSCCAEPVDLGHGHDSGCCGDKSQQPHQHEVQVQQSCHNKPSGLDSGCCGGKSQQPHQHELQQSCHDKPSGLDIGTGPKHEGSSTLVNLEGDAKEELKVLVNGFCSSPADLAITSLKVKSDSHCKSNCSSRERCHHGSNCCRSYAKESCSHDHHHTRAHGVGTLKEIVIE</sequence>
<reference key="1">
    <citation type="submission" date="2001-08" db="EMBL/GenBank/DDBJ databases">
        <title>AtHMA2, a putative heavy-metal P-type ATPase in Arabidopsis.</title>
        <authorList>
            <person name="Richaud P."/>
        </authorList>
    </citation>
    <scope>NUCLEOTIDE SEQUENCE [MRNA]</scope>
    <source>
        <strain>cv. Wassilewskija</strain>
        <tissue>Leaf</tissue>
    </source>
</reference>
<reference key="2">
    <citation type="journal article" date="2004" name="Plant Cell">
        <title>P-type ATPase heavy metal transporters with roles in essential zinc homeostasis in Arabidopsis.</title>
        <authorList>
            <person name="Hussain D."/>
            <person name="Haydon M.J."/>
            <person name="Wang Y."/>
            <person name="Wong E."/>
            <person name="Sherson S.M."/>
            <person name="Young J."/>
            <person name="Camakaris J."/>
            <person name="Harper J.F."/>
            <person name="Cobbett C.S."/>
        </authorList>
    </citation>
    <scope>NUCLEOTIDE SEQUENCE [MRNA]</scope>
    <scope>FUNCTION</scope>
    <scope>TISSUE SPECIFICITY</scope>
    <scope>SUBCELLULAR LOCATION</scope>
    <source>
        <strain>cv. Columbia</strain>
    </source>
</reference>
<reference key="3">
    <citation type="journal article" date="1999" name="Nature">
        <title>Sequence and analysis of chromosome 4 of the plant Arabidopsis thaliana.</title>
        <authorList>
            <person name="Mayer K.F.X."/>
            <person name="Schueller C."/>
            <person name="Wambutt R."/>
            <person name="Murphy G."/>
            <person name="Volckaert G."/>
            <person name="Pohl T."/>
            <person name="Duesterhoeft A."/>
            <person name="Stiekema W."/>
            <person name="Entian K.-D."/>
            <person name="Terryn N."/>
            <person name="Harris B."/>
            <person name="Ansorge W."/>
            <person name="Brandt P."/>
            <person name="Grivell L.A."/>
            <person name="Rieger M."/>
            <person name="Weichselgartner M."/>
            <person name="de Simone V."/>
            <person name="Obermaier B."/>
            <person name="Mache R."/>
            <person name="Mueller M."/>
            <person name="Kreis M."/>
            <person name="Delseny M."/>
            <person name="Puigdomenech P."/>
            <person name="Watson M."/>
            <person name="Schmidtheini T."/>
            <person name="Reichert B."/>
            <person name="Portetelle D."/>
            <person name="Perez-Alonso M."/>
            <person name="Boutry M."/>
            <person name="Bancroft I."/>
            <person name="Vos P."/>
            <person name="Hoheisel J."/>
            <person name="Zimmermann W."/>
            <person name="Wedler H."/>
            <person name="Ridley P."/>
            <person name="Langham S.-A."/>
            <person name="McCullagh B."/>
            <person name="Bilham L."/>
            <person name="Robben J."/>
            <person name="van der Schueren J."/>
            <person name="Grymonprez B."/>
            <person name="Chuang Y.-J."/>
            <person name="Vandenbussche F."/>
            <person name="Braeken M."/>
            <person name="Weltjens I."/>
            <person name="Voet M."/>
            <person name="Bastiaens I."/>
            <person name="Aert R."/>
            <person name="Defoor E."/>
            <person name="Weitzenegger T."/>
            <person name="Bothe G."/>
            <person name="Ramsperger U."/>
            <person name="Hilbert H."/>
            <person name="Braun M."/>
            <person name="Holzer E."/>
            <person name="Brandt A."/>
            <person name="Peters S."/>
            <person name="van Staveren M."/>
            <person name="Dirkse W."/>
            <person name="Mooijman P."/>
            <person name="Klein Lankhorst R."/>
            <person name="Rose M."/>
            <person name="Hauf J."/>
            <person name="Koetter P."/>
            <person name="Berneiser S."/>
            <person name="Hempel S."/>
            <person name="Feldpausch M."/>
            <person name="Lamberth S."/>
            <person name="Van den Daele H."/>
            <person name="De Keyser A."/>
            <person name="Buysshaert C."/>
            <person name="Gielen J."/>
            <person name="Villarroel R."/>
            <person name="De Clercq R."/>
            <person name="van Montagu M."/>
            <person name="Rogers J."/>
            <person name="Cronin A."/>
            <person name="Quail M.A."/>
            <person name="Bray-Allen S."/>
            <person name="Clark L."/>
            <person name="Doggett J."/>
            <person name="Hall S."/>
            <person name="Kay M."/>
            <person name="Lennard N."/>
            <person name="McLay K."/>
            <person name="Mayes R."/>
            <person name="Pettett A."/>
            <person name="Rajandream M.A."/>
            <person name="Lyne M."/>
            <person name="Benes V."/>
            <person name="Rechmann S."/>
            <person name="Borkova D."/>
            <person name="Bloecker H."/>
            <person name="Scharfe M."/>
            <person name="Grimm M."/>
            <person name="Loehnert T.-H."/>
            <person name="Dose S."/>
            <person name="de Haan M."/>
            <person name="Maarse A.C."/>
            <person name="Schaefer M."/>
            <person name="Mueller-Auer S."/>
            <person name="Gabel C."/>
            <person name="Fuchs M."/>
            <person name="Fartmann B."/>
            <person name="Granderath K."/>
            <person name="Dauner D."/>
            <person name="Herzl A."/>
            <person name="Neumann S."/>
            <person name="Argiriou A."/>
            <person name="Vitale D."/>
            <person name="Liguori R."/>
            <person name="Piravandi E."/>
            <person name="Massenet O."/>
            <person name="Quigley F."/>
            <person name="Clabauld G."/>
            <person name="Muendlein A."/>
            <person name="Felber R."/>
            <person name="Schnabl S."/>
            <person name="Hiller R."/>
            <person name="Schmidt W."/>
            <person name="Lecharny A."/>
            <person name="Aubourg S."/>
            <person name="Chefdor F."/>
            <person name="Cooke R."/>
            <person name="Berger C."/>
            <person name="Monfort A."/>
            <person name="Casacuberta E."/>
            <person name="Gibbons T."/>
            <person name="Weber N."/>
            <person name="Vandenbol M."/>
            <person name="Bargues M."/>
            <person name="Terol J."/>
            <person name="Torres A."/>
            <person name="Perez-Perez A."/>
            <person name="Purnelle B."/>
            <person name="Bent E."/>
            <person name="Johnson S."/>
            <person name="Tacon D."/>
            <person name="Jesse T."/>
            <person name="Heijnen L."/>
            <person name="Schwarz S."/>
            <person name="Scholler P."/>
            <person name="Heber S."/>
            <person name="Francs P."/>
            <person name="Bielke C."/>
            <person name="Frishman D."/>
            <person name="Haase D."/>
            <person name="Lemcke K."/>
            <person name="Mewes H.-W."/>
            <person name="Stocker S."/>
            <person name="Zaccaria P."/>
            <person name="Bevan M."/>
            <person name="Wilson R.K."/>
            <person name="de la Bastide M."/>
            <person name="Habermann K."/>
            <person name="Parnell L."/>
            <person name="Dedhia N."/>
            <person name="Gnoj L."/>
            <person name="Schutz K."/>
            <person name="Huang E."/>
            <person name="Spiegel L."/>
            <person name="Sekhon M."/>
            <person name="Murray J."/>
            <person name="Sheet P."/>
            <person name="Cordes M."/>
            <person name="Abu-Threideh J."/>
            <person name="Stoneking T."/>
            <person name="Kalicki J."/>
            <person name="Graves T."/>
            <person name="Harmon G."/>
            <person name="Edwards J."/>
            <person name="Latreille P."/>
            <person name="Courtney L."/>
            <person name="Cloud J."/>
            <person name="Abbott A."/>
            <person name="Scott K."/>
            <person name="Johnson D."/>
            <person name="Minx P."/>
            <person name="Bentley D."/>
            <person name="Fulton B."/>
            <person name="Miller N."/>
            <person name="Greco T."/>
            <person name="Kemp K."/>
            <person name="Kramer J."/>
            <person name="Fulton L."/>
            <person name="Mardis E."/>
            <person name="Dante M."/>
            <person name="Pepin K."/>
            <person name="Hillier L.W."/>
            <person name="Nelson J."/>
            <person name="Spieth J."/>
            <person name="Ryan E."/>
            <person name="Andrews S."/>
            <person name="Geisel C."/>
            <person name="Layman D."/>
            <person name="Du H."/>
            <person name="Ali J."/>
            <person name="Berghoff A."/>
            <person name="Jones K."/>
            <person name="Drone K."/>
            <person name="Cotton M."/>
            <person name="Joshu C."/>
            <person name="Antonoiu B."/>
            <person name="Zidanic M."/>
            <person name="Strong C."/>
            <person name="Sun H."/>
            <person name="Lamar B."/>
            <person name="Yordan C."/>
            <person name="Ma P."/>
            <person name="Zhong J."/>
            <person name="Preston R."/>
            <person name="Vil D."/>
            <person name="Shekher M."/>
            <person name="Matero A."/>
            <person name="Shah R."/>
            <person name="Swaby I.K."/>
            <person name="O'Shaughnessy A."/>
            <person name="Rodriguez M."/>
            <person name="Hoffman J."/>
            <person name="Till S."/>
            <person name="Granat S."/>
            <person name="Shohdy N."/>
            <person name="Hasegawa A."/>
            <person name="Hameed A."/>
            <person name="Lodhi M."/>
            <person name="Johnson A."/>
            <person name="Chen E."/>
            <person name="Marra M.A."/>
            <person name="Martienssen R."/>
            <person name="McCombie W.R."/>
        </authorList>
    </citation>
    <scope>NUCLEOTIDE SEQUENCE [LARGE SCALE GENOMIC DNA]</scope>
    <source>
        <strain>cv. Columbia</strain>
    </source>
</reference>
<reference key="4">
    <citation type="journal article" date="2017" name="Plant J.">
        <title>Araport11: a complete reannotation of the Arabidopsis thaliana reference genome.</title>
        <authorList>
            <person name="Cheng C.Y."/>
            <person name="Krishnakumar V."/>
            <person name="Chan A.P."/>
            <person name="Thibaud-Nissen F."/>
            <person name="Schobel S."/>
            <person name="Town C.D."/>
        </authorList>
    </citation>
    <scope>GENOME REANNOTATION</scope>
    <source>
        <strain>cv. Columbia</strain>
    </source>
</reference>